<keyword id="KW-0049">Antioxidant</keyword>
<keyword id="KW-0186">Copper</keyword>
<keyword id="KW-0963">Cytoplasm</keyword>
<keyword id="KW-0903">Direct protein sequencing</keyword>
<keyword id="KW-1015">Disulfide bond</keyword>
<keyword id="KW-0479">Metal-binding</keyword>
<keyword id="KW-0560">Oxidoreductase</keyword>
<keyword id="KW-0862">Zinc</keyword>
<feature type="initiator methionine" description="Removed" evidence="1">
    <location>
        <position position="1"/>
    </location>
</feature>
<feature type="chain" id="PRO_0000164134" description="Superoxide dismutase [Cu-Zn]">
    <location>
        <begin position="2"/>
        <end position="152"/>
    </location>
</feature>
<feature type="binding site">
    <location>
        <position position="45"/>
    </location>
    <ligand>
        <name>Cu cation</name>
        <dbReference type="ChEBI" id="CHEBI:23378"/>
        <note>catalytic</note>
    </ligand>
</feature>
<feature type="binding site">
    <location>
        <position position="47"/>
    </location>
    <ligand>
        <name>Cu cation</name>
        <dbReference type="ChEBI" id="CHEBI:23378"/>
        <note>catalytic</note>
    </ligand>
</feature>
<feature type="binding site">
    <location>
        <position position="62"/>
    </location>
    <ligand>
        <name>Cu cation</name>
        <dbReference type="ChEBI" id="CHEBI:23378"/>
        <note>catalytic</note>
    </ligand>
</feature>
<feature type="binding site">
    <location>
        <position position="62"/>
    </location>
    <ligand>
        <name>Zn(2+)</name>
        <dbReference type="ChEBI" id="CHEBI:29105"/>
        <note>structural</note>
    </ligand>
</feature>
<feature type="binding site">
    <location>
        <position position="70"/>
    </location>
    <ligand>
        <name>Zn(2+)</name>
        <dbReference type="ChEBI" id="CHEBI:29105"/>
        <note>structural</note>
    </ligand>
</feature>
<feature type="binding site">
    <location>
        <position position="79"/>
    </location>
    <ligand>
        <name>Zn(2+)</name>
        <dbReference type="ChEBI" id="CHEBI:29105"/>
        <note>structural</note>
    </ligand>
</feature>
<feature type="binding site">
    <location>
        <position position="82"/>
    </location>
    <ligand>
        <name>Zn(2+)</name>
        <dbReference type="ChEBI" id="CHEBI:29105"/>
        <note>structural</note>
    </ligand>
</feature>
<feature type="binding site">
    <location>
        <position position="119"/>
    </location>
    <ligand>
        <name>Cu cation</name>
        <dbReference type="ChEBI" id="CHEBI:23378"/>
        <note>catalytic</note>
    </ligand>
</feature>
<feature type="disulfide bond">
    <location>
        <begin position="56"/>
        <end position="145"/>
    </location>
</feature>
<sequence>MAKGVAVLNSSEGVKGTIFFTHEGNGATTVTGTVSGLRPGLHGFHVHALGDNTNGCMSTGPHFNPDGKTHGAPEDANRHAGDLGNIIVGDDGTATFTITDSQIPLSGPNSIVGRAIVVHADPDDLGKGGHELSLSTGNAGGRVACGIIGLQG</sequence>
<protein>
    <recommendedName>
        <fullName>Superoxide dismutase [Cu-Zn]</fullName>
        <ecNumber>1.15.1.1</ecNumber>
    </recommendedName>
</protein>
<comment type="function">
    <text>Destroys radicals which are normally produced within the cells and which are toxic to biological systems.</text>
</comment>
<comment type="catalytic activity">
    <reaction>
        <text>2 superoxide + 2 H(+) = H2O2 + O2</text>
        <dbReference type="Rhea" id="RHEA:20696"/>
        <dbReference type="ChEBI" id="CHEBI:15378"/>
        <dbReference type="ChEBI" id="CHEBI:15379"/>
        <dbReference type="ChEBI" id="CHEBI:16240"/>
        <dbReference type="ChEBI" id="CHEBI:18421"/>
        <dbReference type="EC" id="1.15.1.1"/>
    </reaction>
</comment>
<comment type="cofactor">
    <cofactor>
        <name>Cu cation</name>
        <dbReference type="ChEBI" id="CHEBI:23378"/>
    </cofactor>
    <text>Binds 1 copper ion per subunit.</text>
</comment>
<comment type="cofactor">
    <cofactor>
        <name>Zn(2+)</name>
        <dbReference type="ChEBI" id="CHEBI:29105"/>
    </cofactor>
    <text>Binds 1 zinc ion per subunit.</text>
</comment>
<comment type="subunit">
    <text>Homodimer.</text>
</comment>
<comment type="subcellular location">
    <subcellularLocation>
        <location>Cytoplasm</location>
    </subcellularLocation>
</comment>
<comment type="similarity">
    <text evidence="2">Belongs to the Cu-Zn superoxide dismutase family.</text>
</comment>
<accession>P09678</accession>
<evidence type="ECO:0000269" key="1">
    <source>
    </source>
</evidence>
<evidence type="ECO:0000305" key="2"/>
<name>SODC_BRAOC</name>
<reference key="1">
    <citation type="journal article" date="1986" name="Biol. Chem. Hoppe-Seyler">
        <title>Primary structure of Cu-Zn superoxide dismutase of Brassica oleracea proves homology with corresponding enzymes of animals, fungi and prokaryotes.</title>
        <authorList>
            <person name="Steffens G.J."/>
            <person name="Michelson A.M."/>
            <person name="Otting F."/>
            <person name="Puget K."/>
            <person name="Strassburger W."/>
            <person name="Flohe L."/>
        </authorList>
    </citation>
    <scope>PROTEIN SEQUENCE OF 2-152</scope>
</reference>
<organism>
    <name type="scientific">Brassica oleracea var. capitata</name>
    <name type="common">Cabbage</name>
    <dbReference type="NCBI Taxonomy" id="3716"/>
    <lineage>
        <taxon>Eukaryota</taxon>
        <taxon>Viridiplantae</taxon>
        <taxon>Streptophyta</taxon>
        <taxon>Embryophyta</taxon>
        <taxon>Tracheophyta</taxon>
        <taxon>Spermatophyta</taxon>
        <taxon>Magnoliopsida</taxon>
        <taxon>eudicotyledons</taxon>
        <taxon>Gunneridae</taxon>
        <taxon>Pentapetalae</taxon>
        <taxon>rosids</taxon>
        <taxon>malvids</taxon>
        <taxon>Brassicales</taxon>
        <taxon>Brassicaceae</taxon>
        <taxon>Brassiceae</taxon>
        <taxon>Brassica</taxon>
    </lineage>
</organism>
<dbReference type="EC" id="1.15.1.1"/>
<dbReference type="PIR" id="A25569">
    <property type="entry name" value="DSRPZC"/>
</dbReference>
<dbReference type="SMR" id="P09678"/>
<dbReference type="GO" id="GO:0005737">
    <property type="term" value="C:cytoplasm"/>
    <property type="evidence" value="ECO:0007669"/>
    <property type="project" value="UniProtKB-SubCell"/>
</dbReference>
<dbReference type="GO" id="GO:0005507">
    <property type="term" value="F:copper ion binding"/>
    <property type="evidence" value="ECO:0007669"/>
    <property type="project" value="InterPro"/>
</dbReference>
<dbReference type="GO" id="GO:0004784">
    <property type="term" value="F:superoxide dismutase activity"/>
    <property type="evidence" value="ECO:0007669"/>
    <property type="project" value="UniProtKB-EC"/>
</dbReference>
<dbReference type="CDD" id="cd00305">
    <property type="entry name" value="Cu-Zn_Superoxide_Dismutase"/>
    <property type="match status" value="1"/>
</dbReference>
<dbReference type="FunFam" id="2.60.40.200:FF:000001">
    <property type="entry name" value="Superoxide dismutase [Cu-Zn]"/>
    <property type="match status" value="1"/>
</dbReference>
<dbReference type="Gene3D" id="2.60.40.200">
    <property type="entry name" value="Superoxide dismutase, copper/zinc binding domain"/>
    <property type="match status" value="1"/>
</dbReference>
<dbReference type="InterPro" id="IPR036423">
    <property type="entry name" value="SOD-like_Cu/Zn_dom_sf"/>
</dbReference>
<dbReference type="InterPro" id="IPR024134">
    <property type="entry name" value="SOD_Cu/Zn_/chaperone"/>
</dbReference>
<dbReference type="InterPro" id="IPR018152">
    <property type="entry name" value="SOD_Cu/Zn_BS"/>
</dbReference>
<dbReference type="InterPro" id="IPR001424">
    <property type="entry name" value="SOD_Cu_Zn_dom"/>
</dbReference>
<dbReference type="PANTHER" id="PTHR10003">
    <property type="entry name" value="SUPEROXIDE DISMUTASE CU-ZN -RELATED"/>
    <property type="match status" value="1"/>
</dbReference>
<dbReference type="Pfam" id="PF00080">
    <property type="entry name" value="Sod_Cu"/>
    <property type="match status" value="1"/>
</dbReference>
<dbReference type="PRINTS" id="PR00068">
    <property type="entry name" value="CUZNDISMTASE"/>
</dbReference>
<dbReference type="SUPFAM" id="SSF49329">
    <property type="entry name" value="Cu,Zn superoxide dismutase-like"/>
    <property type="match status" value="1"/>
</dbReference>
<dbReference type="PROSITE" id="PS00087">
    <property type="entry name" value="SOD_CU_ZN_1"/>
    <property type="match status" value="1"/>
</dbReference>
<dbReference type="PROSITE" id="PS00332">
    <property type="entry name" value="SOD_CU_ZN_2"/>
    <property type="match status" value="1"/>
</dbReference>
<proteinExistence type="evidence at protein level"/>
<gene>
    <name type="primary">SODCC</name>
</gene>